<reference key="1">
    <citation type="journal article" date="2002" name="Genome Res.">
        <title>A complete sequence of the T. tengcongensis genome.</title>
        <authorList>
            <person name="Bao Q."/>
            <person name="Tian Y."/>
            <person name="Li W."/>
            <person name="Xu Z."/>
            <person name="Xuan Z."/>
            <person name="Hu S."/>
            <person name="Dong W."/>
            <person name="Yang J."/>
            <person name="Chen Y."/>
            <person name="Xue Y."/>
            <person name="Xu Y."/>
            <person name="Lai X."/>
            <person name="Huang L."/>
            <person name="Dong X."/>
            <person name="Ma Y."/>
            <person name="Ling L."/>
            <person name="Tan H."/>
            <person name="Chen R."/>
            <person name="Wang J."/>
            <person name="Yu J."/>
            <person name="Yang H."/>
        </authorList>
    </citation>
    <scope>NUCLEOTIDE SEQUENCE [LARGE SCALE GENOMIC DNA]</scope>
    <source>
        <strain>DSM 15242 / JCM 11007 / NBRC 100824 / MB4</strain>
    </source>
</reference>
<evidence type="ECO:0000255" key="1">
    <source>
        <dbReference type="HAMAP-Rule" id="MF_01106"/>
    </source>
</evidence>
<dbReference type="EC" id="2.3.1.35" evidence="1"/>
<dbReference type="EC" id="2.3.1.1" evidence="1"/>
<dbReference type="EMBL" id="AE008691">
    <property type="protein sequence ID" value="AAM25627.1"/>
    <property type="molecule type" value="Genomic_DNA"/>
</dbReference>
<dbReference type="SMR" id="Q8R7B9"/>
<dbReference type="STRING" id="273068.TTE2497"/>
<dbReference type="MEROPS" id="T05.002"/>
<dbReference type="KEGG" id="tte:TTE2497"/>
<dbReference type="eggNOG" id="COG1364">
    <property type="taxonomic scope" value="Bacteria"/>
</dbReference>
<dbReference type="HOGENOM" id="CLU_027172_1_0_9"/>
<dbReference type="UniPathway" id="UPA00068">
    <property type="reaction ID" value="UER00106"/>
</dbReference>
<dbReference type="UniPathway" id="UPA00068">
    <property type="reaction ID" value="UER00111"/>
</dbReference>
<dbReference type="Proteomes" id="UP000000555">
    <property type="component" value="Chromosome"/>
</dbReference>
<dbReference type="GO" id="GO:0005737">
    <property type="term" value="C:cytoplasm"/>
    <property type="evidence" value="ECO:0007669"/>
    <property type="project" value="UniProtKB-SubCell"/>
</dbReference>
<dbReference type="GO" id="GO:0004358">
    <property type="term" value="F:glutamate N-acetyltransferase activity"/>
    <property type="evidence" value="ECO:0007669"/>
    <property type="project" value="UniProtKB-UniRule"/>
</dbReference>
<dbReference type="GO" id="GO:0004042">
    <property type="term" value="F:L-glutamate N-acetyltransferase activity"/>
    <property type="evidence" value="ECO:0007669"/>
    <property type="project" value="UniProtKB-UniRule"/>
</dbReference>
<dbReference type="GO" id="GO:0006526">
    <property type="term" value="P:L-arginine biosynthetic process"/>
    <property type="evidence" value="ECO:0007669"/>
    <property type="project" value="UniProtKB-UniRule"/>
</dbReference>
<dbReference type="GO" id="GO:0006592">
    <property type="term" value="P:ornithine biosynthetic process"/>
    <property type="evidence" value="ECO:0007669"/>
    <property type="project" value="TreeGrafter"/>
</dbReference>
<dbReference type="CDD" id="cd02152">
    <property type="entry name" value="OAT"/>
    <property type="match status" value="1"/>
</dbReference>
<dbReference type="FunFam" id="3.10.20.340:FF:000001">
    <property type="entry name" value="Arginine biosynthesis bifunctional protein ArgJ, chloroplastic"/>
    <property type="match status" value="1"/>
</dbReference>
<dbReference type="FunFam" id="3.60.70.12:FF:000001">
    <property type="entry name" value="Arginine biosynthesis bifunctional protein ArgJ, chloroplastic"/>
    <property type="match status" value="1"/>
</dbReference>
<dbReference type="Gene3D" id="3.10.20.340">
    <property type="entry name" value="ArgJ beta chain, C-terminal domain"/>
    <property type="match status" value="1"/>
</dbReference>
<dbReference type="Gene3D" id="3.60.70.12">
    <property type="entry name" value="L-amino peptidase D-ALA esterase/amidase"/>
    <property type="match status" value="1"/>
</dbReference>
<dbReference type="HAMAP" id="MF_01106">
    <property type="entry name" value="ArgJ"/>
    <property type="match status" value="1"/>
</dbReference>
<dbReference type="InterPro" id="IPR002813">
    <property type="entry name" value="Arg_biosynth_ArgJ"/>
</dbReference>
<dbReference type="InterPro" id="IPR016117">
    <property type="entry name" value="ArgJ-like_dom_sf"/>
</dbReference>
<dbReference type="InterPro" id="IPR042195">
    <property type="entry name" value="ArgJ_beta_C"/>
</dbReference>
<dbReference type="NCBIfam" id="TIGR00120">
    <property type="entry name" value="ArgJ"/>
    <property type="match status" value="1"/>
</dbReference>
<dbReference type="NCBIfam" id="NF003802">
    <property type="entry name" value="PRK05388.1"/>
    <property type="match status" value="1"/>
</dbReference>
<dbReference type="PANTHER" id="PTHR23100">
    <property type="entry name" value="ARGININE BIOSYNTHESIS BIFUNCTIONAL PROTEIN ARGJ"/>
    <property type="match status" value="1"/>
</dbReference>
<dbReference type="PANTHER" id="PTHR23100:SF0">
    <property type="entry name" value="ARGININE BIOSYNTHESIS BIFUNCTIONAL PROTEIN ARGJ, MITOCHONDRIAL"/>
    <property type="match status" value="1"/>
</dbReference>
<dbReference type="Pfam" id="PF01960">
    <property type="entry name" value="ArgJ"/>
    <property type="match status" value="1"/>
</dbReference>
<dbReference type="SUPFAM" id="SSF56266">
    <property type="entry name" value="DmpA/ArgJ-like"/>
    <property type="match status" value="1"/>
</dbReference>
<proteinExistence type="inferred from homology"/>
<gene>
    <name evidence="1" type="primary">argJ</name>
    <name type="ordered locus">TTE2497</name>
</gene>
<accession>Q8R7B9</accession>
<organism>
    <name type="scientific">Caldanaerobacter subterraneus subsp. tengcongensis (strain DSM 15242 / JCM 11007 / NBRC 100824 / MB4)</name>
    <name type="common">Thermoanaerobacter tengcongensis</name>
    <dbReference type="NCBI Taxonomy" id="273068"/>
    <lineage>
        <taxon>Bacteria</taxon>
        <taxon>Bacillati</taxon>
        <taxon>Bacillota</taxon>
        <taxon>Clostridia</taxon>
        <taxon>Thermoanaerobacterales</taxon>
        <taxon>Thermoanaerobacteraceae</taxon>
        <taxon>Caldanaerobacter</taxon>
    </lineage>
</organism>
<name>ARGJ_CALS4</name>
<feature type="chain" id="PRO_0000002263" description="Arginine biosynthesis bifunctional protein ArgJ alpha chain" evidence="1">
    <location>
        <begin position="1"/>
        <end position="185"/>
    </location>
</feature>
<feature type="chain" id="PRO_0000002264" description="Arginine biosynthesis bifunctional protein ArgJ beta chain" evidence="1">
    <location>
        <begin position="186"/>
        <end position="403"/>
    </location>
</feature>
<feature type="active site" description="Nucleophile" evidence="1">
    <location>
        <position position="186"/>
    </location>
</feature>
<feature type="binding site" evidence="1">
    <location>
        <position position="149"/>
    </location>
    <ligand>
        <name>substrate</name>
    </ligand>
</feature>
<feature type="binding site" evidence="1">
    <location>
        <position position="175"/>
    </location>
    <ligand>
        <name>substrate</name>
    </ligand>
</feature>
<feature type="binding site" evidence="1">
    <location>
        <position position="186"/>
    </location>
    <ligand>
        <name>substrate</name>
    </ligand>
</feature>
<feature type="binding site" evidence="1">
    <location>
        <position position="272"/>
    </location>
    <ligand>
        <name>substrate</name>
    </ligand>
</feature>
<feature type="binding site" evidence="1">
    <location>
        <position position="398"/>
    </location>
    <ligand>
        <name>substrate</name>
    </ligand>
</feature>
<feature type="binding site" evidence="1">
    <location>
        <position position="403"/>
    </location>
    <ligand>
        <name>substrate</name>
    </ligand>
</feature>
<feature type="site" description="Involved in the stabilization of negative charge on the oxyanion by the formation of the oxyanion hole" evidence="1">
    <location>
        <position position="112"/>
    </location>
</feature>
<feature type="site" description="Involved in the stabilization of negative charge on the oxyanion by the formation of the oxyanion hole" evidence="1">
    <location>
        <position position="113"/>
    </location>
</feature>
<feature type="site" description="Cleavage; by autolysis" evidence="1">
    <location>
        <begin position="185"/>
        <end position="186"/>
    </location>
</feature>
<protein>
    <recommendedName>
        <fullName evidence="1">Arginine biosynthesis bifunctional protein ArgJ</fullName>
    </recommendedName>
    <domain>
        <recommendedName>
            <fullName evidence="1">Glutamate N-acetyltransferase</fullName>
            <ecNumber evidence="1">2.3.1.35</ecNumber>
        </recommendedName>
        <alternativeName>
            <fullName evidence="1">Ornithine acetyltransferase</fullName>
            <shortName evidence="1">OATase</shortName>
        </alternativeName>
        <alternativeName>
            <fullName evidence="1">Ornithine transacetylase</fullName>
        </alternativeName>
    </domain>
    <domain>
        <recommendedName>
            <fullName evidence="1">Amino-acid acetyltransferase</fullName>
            <ecNumber evidence="1">2.3.1.1</ecNumber>
        </recommendedName>
        <alternativeName>
            <fullName evidence="1">N-acetylglutamate synthase</fullName>
            <shortName evidence="1">AGSase</shortName>
        </alternativeName>
    </domain>
    <component>
        <recommendedName>
            <fullName evidence="1">Arginine biosynthesis bifunctional protein ArgJ alpha chain</fullName>
        </recommendedName>
    </component>
    <component>
        <recommendedName>
            <fullName evidence="1">Arginine biosynthesis bifunctional protein ArgJ beta chain</fullName>
        </recommendedName>
    </component>
</protein>
<sequence>MEILDGKIELPKGFVASGVFAGIKRSKKDLALIYSERLANISAVFTTNRVKAAPVILDMERAKKGKAQAIVINSGNANACTGEKGIEDAKSMAKKVAEVLEIEEEDVLVCSTGVIGVPLPMEKVLKGIEVAALSLSKEGGYDAAHAIMTTDTFLKAVTVKFNVEGKDITMTGFAKGSGMIHPNMATMLSFVLTDASVEKATLDKAFKNTVNRTYNMISVDGDMSTNDTAIVMANGMAENKAIQEGTYEFDLFYKALEYVNKTLARLIAKDGEGATKLIEVNVINAKTENDARLAAKAIVNSNLVKTAIFGEDANWGRILAAVGYSGADFDVDKVDIYLKSAKGEVKVCENGSFFAFDESLAKEVLKEKEIFIIVDMKAGEFMATSWGCDLSYDYVKINGSYRT</sequence>
<keyword id="KW-0012">Acyltransferase</keyword>
<keyword id="KW-0028">Amino-acid biosynthesis</keyword>
<keyword id="KW-0055">Arginine biosynthesis</keyword>
<keyword id="KW-0068">Autocatalytic cleavage</keyword>
<keyword id="KW-0963">Cytoplasm</keyword>
<keyword id="KW-0511">Multifunctional enzyme</keyword>
<keyword id="KW-1185">Reference proteome</keyword>
<keyword id="KW-0808">Transferase</keyword>
<comment type="function">
    <text evidence="1">Catalyzes two activities which are involved in the cyclic version of arginine biosynthesis: the synthesis of N-acetylglutamate from glutamate and acetyl-CoA as the acetyl donor, and of ornithine by transacetylation between N(2)-acetylornithine and glutamate.</text>
</comment>
<comment type="catalytic activity">
    <reaction evidence="1">
        <text>N(2)-acetyl-L-ornithine + L-glutamate = N-acetyl-L-glutamate + L-ornithine</text>
        <dbReference type="Rhea" id="RHEA:15349"/>
        <dbReference type="ChEBI" id="CHEBI:29985"/>
        <dbReference type="ChEBI" id="CHEBI:44337"/>
        <dbReference type="ChEBI" id="CHEBI:46911"/>
        <dbReference type="ChEBI" id="CHEBI:57805"/>
        <dbReference type="EC" id="2.3.1.35"/>
    </reaction>
</comment>
<comment type="catalytic activity">
    <reaction evidence="1">
        <text>L-glutamate + acetyl-CoA = N-acetyl-L-glutamate + CoA + H(+)</text>
        <dbReference type="Rhea" id="RHEA:24292"/>
        <dbReference type="ChEBI" id="CHEBI:15378"/>
        <dbReference type="ChEBI" id="CHEBI:29985"/>
        <dbReference type="ChEBI" id="CHEBI:44337"/>
        <dbReference type="ChEBI" id="CHEBI:57287"/>
        <dbReference type="ChEBI" id="CHEBI:57288"/>
        <dbReference type="EC" id="2.3.1.1"/>
    </reaction>
</comment>
<comment type="pathway">
    <text evidence="1">Amino-acid biosynthesis; L-arginine biosynthesis; L-ornithine and N-acetyl-L-glutamate from L-glutamate and N(2)-acetyl-L-ornithine (cyclic): step 1/1.</text>
</comment>
<comment type="pathway">
    <text evidence="1">Amino-acid biosynthesis; L-arginine biosynthesis; N(2)-acetyl-L-ornithine from L-glutamate: step 1/4.</text>
</comment>
<comment type="subunit">
    <text evidence="1">Heterotetramer of two alpha and two beta chains.</text>
</comment>
<comment type="subcellular location">
    <subcellularLocation>
        <location evidence="1">Cytoplasm</location>
    </subcellularLocation>
</comment>
<comment type="similarity">
    <text evidence="1">Belongs to the ArgJ family.</text>
</comment>